<sequence length="427" mass="48443">MAITDVDVFAHLTDADIENLAAELDAIRRDVEESRGERDARYIRRTIAAQRALEVSGRLLLAGSSRRLAWWTGALTLGVAKIIENMEIGHNVMHGQWDWMNDPEIHSSTWEWDMSGSSKHWRYTHNFVHHKYTNILGMDDDVGYGMLRVTRDQRWKRYNIFNVVWNTILAIGFEWGVALQHLEIGKIFKGRADREAAKTRLREFSAKAGRQVFKDYVAFPALTSLSPGATYRSTLTANVVANVIRNVWSNAVIFCGHFPDGAEKFTKTDMIGEPKGQWYLRQMLGSANFNAGPALRFMSGNLCHQIEHHLYPDLPSNRLHEISVRVREVCDRYDLPYTTGSFLVQYGKTWRTLAKLSLPDKYLRDNADDAPETRSERMFAGLGPGFAGADPVTGRRRGLKTAIAAVRGRRRSKRMAKSVTEPDDLAA</sequence>
<organism>
    <name type="scientific">Mycobacterium tuberculosis (strain CDC 1551 / Oshkosh)</name>
    <dbReference type="NCBI Taxonomy" id="83331"/>
    <lineage>
        <taxon>Bacteria</taxon>
        <taxon>Bacillati</taxon>
        <taxon>Actinomycetota</taxon>
        <taxon>Actinomycetes</taxon>
        <taxon>Mycobacteriales</taxon>
        <taxon>Mycobacteriaceae</taxon>
        <taxon>Mycobacterium</taxon>
        <taxon>Mycobacterium tuberculosis complex</taxon>
    </lineage>
</organism>
<reference key="1">
    <citation type="journal article" date="2002" name="J. Bacteriol.">
        <title>Whole-genome comparison of Mycobacterium tuberculosis clinical and laboratory strains.</title>
        <authorList>
            <person name="Fleischmann R.D."/>
            <person name="Alland D."/>
            <person name="Eisen J.A."/>
            <person name="Carpenter L."/>
            <person name="White O."/>
            <person name="Peterson J.D."/>
            <person name="DeBoy R.T."/>
            <person name="Dodson R.J."/>
            <person name="Gwinn M.L."/>
            <person name="Haft D.H."/>
            <person name="Hickey E.K."/>
            <person name="Kolonay J.F."/>
            <person name="Nelson W.C."/>
            <person name="Umayam L.A."/>
            <person name="Ermolaeva M.D."/>
            <person name="Salzberg S.L."/>
            <person name="Delcher A."/>
            <person name="Utterback T.R."/>
            <person name="Weidman J.F."/>
            <person name="Khouri H.M."/>
            <person name="Gill J."/>
            <person name="Mikula A."/>
            <person name="Bishai W."/>
            <person name="Jacobs W.R. Jr."/>
            <person name="Venter J.C."/>
            <person name="Fraser C.M."/>
        </authorList>
    </citation>
    <scope>NUCLEOTIDE SEQUENCE [LARGE SCALE GENOMIC DNA]</scope>
    <source>
        <strain>CDC 1551 / Oshkosh</strain>
    </source>
</reference>
<comment type="function">
    <text evidence="2">Is likely involved in the aerobic desaturation system responsible for the synthesis of oleic acid from stearoyl-CoA; oleic acid is a precursor of mycobacterial membrane phospholipids and triglycerides. Catalyzes the conversion of stearoyl-CoA to oleoyl-CoA by introduction of a cis double bond between carbons 9 and 10 of the acyl chain. Requires the electron transfer partner Rv3230c to pass two electrons from NADPH to its active site diiron center. Is also able to catalyze the 9-desaturation of palmitoyl-CoA to palmitoleoyl-CoA.</text>
</comment>
<comment type="catalytic activity">
    <reaction evidence="2">
        <text>octadecanoyl-CoA + NADPH + O2 + H(+) = (9Z)-octadecenoyl-CoA + NADP(+) + 2 H2O</text>
        <dbReference type="Rhea" id="RHEA:37971"/>
        <dbReference type="ChEBI" id="CHEBI:15377"/>
        <dbReference type="ChEBI" id="CHEBI:15378"/>
        <dbReference type="ChEBI" id="CHEBI:15379"/>
        <dbReference type="ChEBI" id="CHEBI:57387"/>
        <dbReference type="ChEBI" id="CHEBI:57394"/>
        <dbReference type="ChEBI" id="CHEBI:57783"/>
        <dbReference type="ChEBI" id="CHEBI:58349"/>
        <dbReference type="EC" id="1.14.19.n4"/>
    </reaction>
</comment>
<comment type="cofactor">
    <cofactor evidence="1">
        <name>Fe(2+)</name>
        <dbReference type="ChEBI" id="CHEBI:29033"/>
    </cofactor>
    <text evidence="1">Expected to bind 2 Fe(2+) ions per subunit.</text>
</comment>
<comment type="pathway">
    <text evidence="2">Lipid metabolism; fatty acid metabolism.</text>
</comment>
<comment type="subunit">
    <text evidence="2">Interacts with the electron transfer protein Rv3230c to form a functional acyl-CoA desaturase complex.</text>
</comment>
<comment type="subcellular location">
    <subcellularLocation>
        <location evidence="2">Cell membrane</location>
        <topology evidence="2">Multi-pass membrane protein</topology>
    </subcellularLocation>
</comment>
<comment type="PTM">
    <text evidence="2">Is rapidly degraded by a mycobacterial protein degradation system that specifically targets the residues LAA at the C-terminus, leading to a post-translational proteolytic regulation of DesA3 essential activity.</text>
</comment>
<comment type="similarity">
    <text evidence="3">Belongs to the fatty acid desaturase type 1 family.</text>
</comment>
<name>DESA3_MYCTO</name>
<accession>P9WNZ2</accession>
<accession>L0TC73</accession>
<accession>Q6MWZ3</accession>
<accession>Q7D5W1</accession>
<feature type="chain" id="PRO_0000427042" description="NADPH-dependent stearoyl-CoA 9-desaturase">
    <location>
        <begin position="1"/>
        <end position="427"/>
    </location>
</feature>
<feature type="binding site" evidence="2">
    <location>
        <position position="90"/>
    </location>
    <ligand>
        <name>Fe cation</name>
        <dbReference type="ChEBI" id="CHEBI:24875"/>
        <label>1</label>
    </ligand>
</feature>
<feature type="binding site" evidence="2">
    <location>
        <position position="94"/>
    </location>
    <ligand>
        <name>Fe cation</name>
        <dbReference type="ChEBI" id="CHEBI:24875"/>
        <label>1</label>
    </ligand>
</feature>
<feature type="binding site" evidence="2">
    <location>
        <position position="125"/>
    </location>
    <ligand>
        <name>Fe cation</name>
        <dbReference type="ChEBI" id="CHEBI:24875"/>
        <label>1</label>
    </ligand>
</feature>
<feature type="binding site" evidence="2">
    <location>
        <position position="129"/>
    </location>
    <ligand>
        <name>Fe cation</name>
        <dbReference type="ChEBI" id="CHEBI:24875"/>
        <label>2</label>
    </ligand>
</feature>
<feature type="binding site" evidence="2">
    <location>
        <position position="130"/>
    </location>
    <ligand>
        <name>Fe cation</name>
        <dbReference type="ChEBI" id="CHEBI:24875"/>
        <label>1</label>
    </ligand>
</feature>
<feature type="binding site" evidence="2">
    <location>
        <position position="304"/>
    </location>
    <ligand>
        <name>Fe cation</name>
        <dbReference type="ChEBI" id="CHEBI:24875"/>
        <label>2</label>
    </ligand>
</feature>
<feature type="binding site" evidence="2">
    <location>
        <position position="308"/>
    </location>
    <ligand>
        <name>Fe cation</name>
        <dbReference type="ChEBI" id="CHEBI:24875"/>
        <label>1</label>
    </ligand>
</feature>
<feature type="binding site" evidence="2">
    <location>
        <position position="309"/>
    </location>
    <ligand>
        <name>Fe cation</name>
        <dbReference type="ChEBI" id="CHEBI:24875"/>
        <label>2</label>
    </ligand>
</feature>
<protein>
    <recommendedName>
        <fullName evidence="2">NADPH-dependent stearoyl-CoA 9-desaturase</fullName>
        <ecNumber evidence="2">1.14.19.n4</ecNumber>
    </recommendedName>
    <alternativeName>
        <fullName evidence="2">Delta(9)-stearoyl desaturase</fullName>
    </alternativeName>
    <alternativeName>
        <fullName evidence="2">Stearoyl-CoA 9-desaturase (NADPH)</fullName>
    </alternativeName>
    <alternativeName>
        <fullName evidence="2">Stearoyl-CoA Delta(9)-desaturase</fullName>
    </alternativeName>
</protein>
<dbReference type="EC" id="1.14.19.n4" evidence="2"/>
<dbReference type="EMBL" id="AE000516">
    <property type="protein sequence ID" value="AAK47669.1"/>
    <property type="molecule type" value="Genomic_DNA"/>
</dbReference>
<dbReference type="PIR" id="G70590">
    <property type="entry name" value="G70590"/>
</dbReference>
<dbReference type="RefSeq" id="WP_003416919.1">
    <property type="nucleotide sequence ID" value="NZ_KK341227.1"/>
</dbReference>
<dbReference type="SMR" id="P9WNZ2"/>
<dbReference type="KEGG" id="mtc:MT3326"/>
<dbReference type="PATRIC" id="fig|83331.31.peg.3582"/>
<dbReference type="HOGENOM" id="CLU_045383_0_0_11"/>
<dbReference type="UniPathway" id="UPA00199"/>
<dbReference type="Proteomes" id="UP000001020">
    <property type="component" value="Chromosome"/>
</dbReference>
<dbReference type="GO" id="GO:0005886">
    <property type="term" value="C:plasma membrane"/>
    <property type="evidence" value="ECO:0007669"/>
    <property type="project" value="UniProtKB-SubCell"/>
</dbReference>
<dbReference type="GO" id="GO:0046872">
    <property type="term" value="F:metal ion binding"/>
    <property type="evidence" value="ECO:0007669"/>
    <property type="project" value="UniProtKB-KW"/>
</dbReference>
<dbReference type="GO" id="GO:0016717">
    <property type="term" value="F:oxidoreductase activity, acting on paired donors, with oxidation of a pair of donors resulting in the reduction of molecular oxygen to two molecules of water"/>
    <property type="evidence" value="ECO:0007669"/>
    <property type="project" value="TreeGrafter"/>
</dbReference>
<dbReference type="GO" id="GO:0006633">
    <property type="term" value="P:fatty acid biosynthetic process"/>
    <property type="evidence" value="ECO:0007669"/>
    <property type="project" value="UniProtKB-KW"/>
</dbReference>
<dbReference type="CDD" id="cd03506">
    <property type="entry name" value="Delta6-FADS-like"/>
    <property type="match status" value="1"/>
</dbReference>
<dbReference type="InterPro" id="IPR005804">
    <property type="entry name" value="FA_desaturase_dom"/>
</dbReference>
<dbReference type="InterPro" id="IPR012171">
    <property type="entry name" value="Fatty_acid_desaturase"/>
</dbReference>
<dbReference type="PANTHER" id="PTHR19353:SF19">
    <property type="entry name" value="DELTA(5) FATTY ACID DESATURASE C-RELATED"/>
    <property type="match status" value="1"/>
</dbReference>
<dbReference type="PANTHER" id="PTHR19353">
    <property type="entry name" value="FATTY ACID DESATURASE 2"/>
    <property type="match status" value="1"/>
</dbReference>
<dbReference type="Pfam" id="PF00487">
    <property type="entry name" value="FA_desaturase"/>
    <property type="match status" value="1"/>
</dbReference>
<proteinExistence type="inferred from homology"/>
<keyword id="KW-1003">Cell membrane</keyword>
<keyword id="KW-0275">Fatty acid biosynthesis</keyword>
<keyword id="KW-0276">Fatty acid metabolism</keyword>
<keyword id="KW-0408">Iron</keyword>
<keyword id="KW-0444">Lipid biosynthesis</keyword>
<keyword id="KW-0443">Lipid metabolism</keyword>
<keyword id="KW-0472">Membrane</keyword>
<keyword id="KW-0479">Metal-binding</keyword>
<keyword id="KW-0521">NADP</keyword>
<keyword id="KW-0560">Oxidoreductase</keyword>
<keyword id="KW-1185">Reference proteome</keyword>
<evidence type="ECO:0000250" key="1">
    <source>
        <dbReference type="UniProtKB" id="P13516"/>
    </source>
</evidence>
<evidence type="ECO:0000250" key="2">
    <source>
        <dbReference type="UniProtKB" id="P9WNZ3"/>
    </source>
</evidence>
<evidence type="ECO:0000305" key="3"/>
<gene>
    <name type="primary">desA3</name>
    <name type="ordered locus">MT3326</name>
</gene>